<dbReference type="EC" id="2.7.7.18" evidence="1"/>
<dbReference type="EMBL" id="CP000826">
    <property type="protein sequence ID" value="ABV40308.1"/>
    <property type="molecule type" value="Genomic_DNA"/>
</dbReference>
<dbReference type="SMR" id="A8GB18"/>
<dbReference type="STRING" id="399741.Spro_1204"/>
<dbReference type="KEGG" id="spe:Spro_1204"/>
<dbReference type="eggNOG" id="COG1057">
    <property type="taxonomic scope" value="Bacteria"/>
</dbReference>
<dbReference type="HOGENOM" id="CLU_069765_0_0_6"/>
<dbReference type="OrthoDB" id="5295945at2"/>
<dbReference type="UniPathway" id="UPA00253">
    <property type="reaction ID" value="UER00332"/>
</dbReference>
<dbReference type="GO" id="GO:0005524">
    <property type="term" value="F:ATP binding"/>
    <property type="evidence" value="ECO:0007669"/>
    <property type="project" value="UniProtKB-KW"/>
</dbReference>
<dbReference type="GO" id="GO:0004515">
    <property type="term" value="F:nicotinate-nucleotide adenylyltransferase activity"/>
    <property type="evidence" value="ECO:0007669"/>
    <property type="project" value="UniProtKB-UniRule"/>
</dbReference>
<dbReference type="GO" id="GO:0009435">
    <property type="term" value="P:NAD biosynthetic process"/>
    <property type="evidence" value="ECO:0007669"/>
    <property type="project" value="UniProtKB-UniRule"/>
</dbReference>
<dbReference type="CDD" id="cd02165">
    <property type="entry name" value="NMNAT"/>
    <property type="match status" value="1"/>
</dbReference>
<dbReference type="FunFam" id="3.40.50.620:FF:000039">
    <property type="entry name" value="Probable nicotinate-nucleotide adenylyltransferase"/>
    <property type="match status" value="1"/>
</dbReference>
<dbReference type="Gene3D" id="3.40.50.620">
    <property type="entry name" value="HUPs"/>
    <property type="match status" value="1"/>
</dbReference>
<dbReference type="HAMAP" id="MF_00244">
    <property type="entry name" value="NaMN_adenylyltr"/>
    <property type="match status" value="1"/>
</dbReference>
<dbReference type="InterPro" id="IPR004821">
    <property type="entry name" value="Cyt_trans-like"/>
</dbReference>
<dbReference type="InterPro" id="IPR005248">
    <property type="entry name" value="NadD/NMNAT"/>
</dbReference>
<dbReference type="InterPro" id="IPR014729">
    <property type="entry name" value="Rossmann-like_a/b/a_fold"/>
</dbReference>
<dbReference type="NCBIfam" id="TIGR00125">
    <property type="entry name" value="cyt_tran_rel"/>
    <property type="match status" value="1"/>
</dbReference>
<dbReference type="NCBIfam" id="TIGR00482">
    <property type="entry name" value="nicotinate (nicotinamide) nucleotide adenylyltransferase"/>
    <property type="match status" value="1"/>
</dbReference>
<dbReference type="NCBIfam" id="NF000839">
    <property type="entry name" value="PRK00071.1-1"/>
    <property type="match status" value="1"/>
</dbReference>
<dbReference type="NCBIfam" id="NF000840">
    <property type="entry name" value="PRK00071.1-3"/>
    <property type="match status" value="1"/>
</dbReference>
<dbReference type="PANTHER" id="PTHR39321">
    <property type="entry name" value="NICOTINATE-NUCLEOTIDE ADENYLYLTRANSFERASE-RELATED"/>
    <property type="match status" value="1"/>
</dbReference>
<dbReference type="PANTHER" id="PTHR39321:SF3">
    <property type="entry name" value="PHOSPHOPANTETHEINE ADENYLYLTRANSFERASE"/>
    <property type="match status" value="1"/>
</dbReference>
<dbReference type="Pfam" id="PF01467">
    <property type="entry name" value="CTP_transf_like"/>
    <property type="match status" value="1"/>
</dbReference>
<dbReference type="SUPFAM" id="SSF52374">
    <property type="entry name" value="Nucleotidylyl transferase"/>
    <property type="match status" value="1"/>
</dbReference>
<proteinExistence type="inferred from homology"/>
<protein>
    <recommendedName>
        <fullName evidence="1">Probable nicotinate-nucleotide adenylyltransferase</fullName>
        <ecNumber evidence="1">2.7.7.18</ecNumber>
    </recommendedName>
    <alternativeName>
        <fullName evidence="1">Deamido-NAD(+) diphosphorylase</fullName>
    </alternativeName>
    <alternativeName>
        <fullName evidence="1">Deamido-NAD(+) pyrophosphorylase</fullName>
    </alternativeName>
    <alternativeName>
        <fullName evidence="1">Nicotinate mononucleotide adenylyltransferase</fullName>
        <shortName evidence="1">NaMN adenylyltransferase</shortName>
    </alternativeName>
</protein>
<comment type="function">
    <text evidence="1">Catalyzes the reversible adenylation of nicotinate mononucleotide (NaMN) to nicotinic acid adenine dinucleotide (NaAD).</text>
</comment>
<comment type="catalytic activity">
    <reaction evidence="1">
        <text>nicotinate beta-D-ribonucleotide + ATP + H(+) = deamido-NAD(+) + diphosphate</text>
        <dbReference type="Rhea" id="RHEA:22860"/>
        <dbReference type="ChEBI" id="CHEBI:15378"/>
        <dbReference type="ChEBI" id="CHEBI:30616"/>
        <dbReference type="ChEBI" id="CHEBI:33019"/>
        <dbReference type="ChEBI" id="CHEBI:57502"/>
        <dbReference type="ChEBI" id="CHEBI:58437"/>
        <dbReference type="EC" id="2.7.7.18"/>
    </reaction>
</comment>
<comment type="pathway">
    <text evidence="1">Cofactor biosynthesis; NAD(+) biosynthesis; deamido-NAD(+) from nicotinate D-ribonucleotide: step 1/1.</text>
</comment>
<comment type="similarity">
    <text evidence="1">Belongs to the NadD family.</text>
</comment>
<organism>
    <name type="scientific">Serratia proteamaculans (strain 568)</name>
    <dbReference type="NCBI Taxonomy" id="399741"/>
    <lineage>
        <taxon>Bacteria</taxon>
        <taxon>Pseudomonadati</taxon>
        <taxon>Pseudomonadota</taxon>
        <taxon>Gammaproteobacteria</taxon>
        <taxon>Enterobacterales</taxon>
        <taxon>Yersiniaceae</taxon>
        <taxon>Serratia</taxon>
    </lineage>
</organism>
<keyword id="KW-0067">ATP-binding</keyword>
<keyword id="KW-0520">NAD</keyword>
<keyword id="KW-0547">Nucleotide-binding</keyword>
<keyword id="KW-0548">Nucleotidyltransferase</keyword>
<keyword id="KW-0662">Pyridine nucleotide biosynthesis</keyword>
<keyword id="KW-0808">Transferase</keyword>
<sequence length="220" mass="25065">MPTNSQDTTVLHALFGGTFDPIHYGHLRPVEALAAEAGLNRVTLLPNHVPPHRPQPEANAQQRLKMVELAIAGNPLFAVDDRELHRTTPSYTIETLEAIRKERGAALPLAFIIGQDSLLTLHKWHRWQSLLDTCHLLVLARPGYNDRMDTPELQQWLEQHQVTDAALLSRQPQGYIYLADTPQLEISATEIRQRRHQGLNCDDLLPRSVQRYIELQGLYR</sequence>
<name>NADD_SERP5</name>
<reference key="1">
    <citation type="submission" date="2007-09" db="EMBL/GenBank/DDBJ databases">
        <title>Complete sequence of chromosome of Serratia proteamaculans 568.</title>
        <authorList>
            <consortium name="US DOE Joint Genome Institute"/>
            <person name="Copeland A."/>
            <person name="Lucas S."/>
            <person name="Lapidus A."/>
            <person name="Barry K."/>
            <person name="Glavina del Rio T."/>
            <person name="Dalin E."/>
            <person name="Tice H."/>
            <person name="Pitluck S."/>
            <person name="Chain P."/>
            <person name="Malfatti S."/>
            <person name="Shin M."/>
            <person name="Vergez L."/>
            <person name="Schmutz J."/>
            <person name="Larimer F."/>
            <person name="Land M."/>
            <person name="Hauser L."/>
            <person name="Kyrpides N."/>
            <person name="Kim E."/>
            <person name="Taghavi S."/>
            <person name="Newman L."/>
            <person name="Vangronsveld J."/>
            <person name="van der Lelie D."/>
            <person name="Richardson P."/>
        </authorList>
    </citation>
    <scope>NUCLEOTIDE SEQUENCE [LARGE SCALE GENOMIC DNA]</scope>
    <source>
        <strain>568</strain>
    </source>
</reference>
<evidence type="ECO:0000255" key="1">
    <source>
        <dbReference type="HAMAP-Rule" id="MF_00244"/>
    </source>
</evidence>
<feature type="chain" id="PRO_1000058995" description="Probable nicotinate-nucleotide adenylyltransferase">
    <location>
        <begin position="1"/>
        <end position="220"/>
    </location>
</feature>
<gene>
    <name evidence="1" type="primary">nadD</name>
    <name type="ordered locus">Spro_1204</name>
</gene>
<accession>A8GB18</accession>